<feature type="chain" id="PRO_0000228662" description="Translation initiation factor eIF2 assembly protein">
    <location>
        <begin position="1"/>
        <end position="336"/>
    </location>
</feature>
<feature type="binding site" evidence="6 9 10">
    <location>
        <position position="104"/>
    </location>
    <ligand>
        <name>ATP</name>
        <dbReference type="ChEBI" id="CHEBI:30616"/>
    </ligand>
</feature>
<feature type="binding site" evidence="6 10">
    <location>
        <position position="107"/>
    </location>
    <ligand>
        <name>ATP</name>
        <dbReference type="ChEBI" id="CHEBI:30616"/>
    </ligand>
</feature>
<feature type="binding site" evidence="6 9 10">
    <location>
        <position position="109"/>
    </location>
    <ligand>
        <name>ATP</name>
        <dbReference type="ChEBI" id="CHEBI:30616"/>
    </ligand>
</feature>
<feature type="binding site" evidence="3">
    <location>
        <position position="111"/>
    </location>
    <ligand>
        <name>ATP</name>
        <dbReference type="ChEBI" id="CHEBI:30616"/>
    </ligand>
</feature>
<feature type="binding site" evidence="3">
    <location>
        <position position="167"/>
    </location>
    <ligand>
        <name>ATP</name>
        <dbReference type="ChEBI" id="CHEBI:30616"/>
    </ligand>
</feature>
<feature type="binding site" evidence="6 9 10">
    <location>
        <position position="168"/>
    </location>
    <ligand>
        <name>ATP</name>
        <dbReference type="ChEBI" id="CHEBI:30616"/>
    </ligand>
</feature>
<feature type="binding site" evidence="3">
    <location>
        <position position="169"/>
    </location>
    <ligand>
        <name>ATP</name>
        <dbReference type="ChEBI" id="CHEBI:30616"/>
    </ligand>
</feature>
<feature type="binding site" evidence="6 9 10">
    <location>
        <position position="170"/>
    </location>
    <ligand>
        <name>ATP</name>
        <dbReference type="ChEBI" id="CHEBI:30616"/>
    </ligand>
</feature>
<feature type="binding site" evidence="6 9 10">
    <location>
        <position position="177"/>
    </location>
    <ligand>
        <name>ATP</name>
        <dbReference type="ChEBI" id="CHEBI:30616"/>
    </ligand>
</feature>
<feature type="binding site" evidence="6 9 10">
    <location>
        <position position="179"/>
    </location>
    <ligand>
        <name>ATP</name>
        <dbReference type="ChEBI" id="CHEBI:30616"/>
    </ligand>
</feature>
<feature type="binding site" evidence="6 9 10">
    <location>
        <position position="193"/>
    </location>
    <ligand>
        <name>ATP</name>
        <dbReference type="ChEBI" id="CHEBI:30616"/>
    </ligand>
</feature>
<feature type="binding site" evidence="3">
    <location>
        <position position="233"/>
    </location>
    <ligand>
        <name>ATP</name>
        <dbReference type="ChEBI" id="CHEBI:30616"/>
    </ligand>
</feature>
<feature type="binding site" evidence="6 10">
    <location>
        <position position="246"/>
    </location>
    <ligand>
        <name>ATP</name>
        <dbReference type="ChEBI" id="CHEBI:30616"/>
    </ligand>
</feature>
<feature type="binding site" evidence="6 9">
    <location>
        <position position="246"/>
    </location>
    <ligand>
        <name>Mg(2+)</name>
        <dbReference type="ChEBI" id="CHEBI:18420"/>
    </ligand>
</feature>
<feature type="binding site" evidence="6 9 10">
    <location>
        <position position="248"/>
    </location>
    <ligand>
        <name>ATP</name>
        <dbReference type="ChEBI" id="CHEBI:30616"/>
    </ligand>
</feature>
<feature type="binding site" evidence="6 9">
    <location>
        <position position="248"/>
    </location>
    <ligand>
        <name>Mg(2+)</name>
        <dbReference type="ChEBI" id="CHEBI:18420"/>
    </ligand>
</feature>
<feature type="modified residue" description="Phosphoserine" evidence="11">
    <location>
        <position position="60"/>
    </location>
</feature>
<feature type="mutagenesis site" description="Severely disrupts assembly factor activity." evidence="6">
    <original>D</original>
    <variation>A</variation>
    <location>
        <position position="233"/>
    </location>
</feature>
<feature type="mutagenesis site" description="Severely disrupts assembly factor activity." evidence="6">
    <original>D</original>
    <variation>A</variation>
    <location>
        <position position="246"/>
    </location>
</feature>
<feature type="sequence conflict" description="In Ref. 1; BAA03593." evidence="8" ref="1">
    <original>A</original>
    <variation>P</variation>
    <location>
        <position position="93"/>
    </location>
</feature>
<feature type="sequence conflict" description="In Ref. 1; BAA03593." evidence="8" ref="1">
    <original>E</original>
    <variation>R</variation>
    <location>
        <position position="317"/>
    </location>
</feature>
<feature type="helix" evidence="13">
    <location>
        <begin position="3"/>
        <end position="8"/>
    </location>
</feature>
<feature type="helix" evidence="13">
    <location>
        <begin position="11"/>
        <end position="18"/>
    </location>
</feature>
<feature type="helix" evidence="13">
    <location>
        <begin position="19"/>
        <end position="21"/>
    </location>
</feature>
<feature type="strand" evidence="13">
    <location>
        <begin position="25"/>
        <end position="29"/>
    </location>
</feature>
<feature type="helix" evidence="13">
    <location>
        <begin position="32"/>
        <end position="38"/>
    </location>
</feature>
<feature type="helix" evidence="13">
    <location>
        <begin position="84"/>
        <end position="96"/>
    </location>
</feature>
<feature type="strand" evidence="13">
    <location>
        <begin position="101"/>
        <end position="104"/>
    </location>
</feature>
<feature type="helix" evidence="13">
    <location>
        <begin position="111"/>
        <end position="116"/>
    </location>
</feature>
<feature type="helix" evidence="13">
    <location>
        <begin position="118"/>
        <end position="120"/>
    </location>
</feature>
<feature type="strand" evidence="13">
    <location>
        <begin position="124"/>
        <end position="126"/>
    </location>
</feature>
<feature type="helix" evidence="13">
    <location>
        <begin position="127"/>
        <end position="136"/>
    </location>
</feature>
<feature type="helix" evidence="13">
    <location>
        <begin position="138"/>
        <end position="145"/>
    </location>
</feature>
<feature type="turn" evidence="13">
    <location>
        <begin position="147"/>
        <end position="150"/>
    </location>
</feature>
<feature type="strand" evidence="13">
    <location>
        <begin position="163"/>
        <end position="168"/>
    </location>
</feature>
<feature type="strand" evidence="13">
    <location>
        <begin position="177"/>
        <end position="183"/>
    </location>
</feature>
<feature type="strand" evidence="13">
    <location>
        <begin position="186"/>
        <end position="194"/>
    </location>
</feature>
<feature type="helix" evidence="13">
    <location>
        <begin position="200"/>
        <end position="204"/>
    </location>
</feature>
<feature type="helix" evidence="13">
    <location>
        <begin position="206"/>
        <end position="220"/>
    </location>
</feature>
<feature type="turn" evidence="13">
    <location>
        <begin position="221"/>
        <end position="224"/>
    </location>
</feature>
<feature type="strand" evidence="13">
    <location>
        <begin position="228"/>
        <end position="236"/>
    </location>
</feature>
<feature type="strand" evidence="13">
    <location>
        <begin position="242"/>
        <end position="248"/>
    </location>
</feature>
<feature type="helix" evidence="13">
    <location>
        <begin position="261"/>
        <end position="265"/>
    </location>
</feature>
<feature type="turn" evidence="13">
    <location>
        <begin position="276"/>
        <end position="278"/>
    </location>
</feature>
<feature type="strand" evidence="12">
    <location>
        <begin position="282"/>
        <end position="284"/>
    </location>
</feature>
<feature type="strand" evidence="13">
    <location>
        <begin position="286"/>
        <end position="288"/>
    </location>
</feature>
<feature type="helix" evidence="13">
    <location>
        <begin position="302"/>
        <end position="305"/>
    </location>
</feature>
<feature type="helix" evidence="13">
    <location>
        <begin position="319"/>
        <end position="335"/>
    </location>
</feature>
<comment type="function">
    <text evidence="1 5 6">ATP-dependent protein-folding chaperone for the eIF2 complex (PubMed:35031321, PubMed:37507029). Binds to the gamma subunit of the eIF2 complex which allows the subunit to assemble with the alpha and beta subunits (By similarity).</text>
</comment>
<comment type="subunit">
    <text evidence="4 5 6">Interacts with the eIF2 complex gamma subunit EIF2S3 (via C-terminus); the interaction is direct (PubMed:35031321, PubMed:37507029). Interacts with the eIF2 complex alpha subunit EIF2S1 (PubMed:31836389, PubMed:35031321). Interacts with the eIF2 complex beta subunit EIF2S2 (PubMed:31836389, PubMed:35031321).</text>
</comment>
<comment type="interaction">
    <interactant intactId="EBI-2808248">
        <id>O75794</id>
    </interactant>
    <interactant intactId="EBI-711977">
        <id>P20042</id>
        <label>EIF2S2</label>
    </interactant>
    <organismsDiffer>false</organismsDiffer>
    <experiments>4</experiments>
</comment>
<comment type="interaction">
    <interactant intactId="EBI-2808248">
        <id>O75794</id>
    </interactant>
    <interactant intactId="EBI-1054228">
        <id>P41091</id>
        <label>EIF2S3</label>
    </interactant>
    <organismsDiffer>false</organismsDiffer>
    <experiments>4</experiments>
</comment>
<comment type="interaction">
    <interactant intactId="EBI-2808248">
        <id>O75794</id>
    </interactant>
    <interactant intactId="EBI-8915">
        <id>P20459</id>
        <label>SUI2</label>
    </interactant>
    <organismsDiffer>true</organismsDiffer>
    <experiments>2</experiments>
</comment>
<comment type="subcellular location">
    <subcellularLocation>
        <location evidence="2">Cytoplasm</location>
    </subcellularLocation>
</comment>
<comment type="tissue specificity">
    <text evidence="7">Widely expressed. Expressed in spleen, thymus, prostate, testis, ovary, small intestine, colon and leukocytes with the highest expression in testis.</text>
</comment>
<comment type="similarity">
    <text evidence="8">Belongs to the CDC123 family.</text>
</comment>
<keyword id="KW-0002">3D-structure</keyword>
<keyword id="KW-0067">ATP-binding</keyword>
<keyword id="KW-0143">Chaperone</keyword>
<keyword id="KW-0963">Cytoplasm</keyword>
<keyword id="KW-0460">Magnesium</keyword>
<keyword id="KW-0479">Metal-binding</keyword>
<keyword id="KW-0547">Nucleotide-binding</keyword>
<keyword id="KW-0597">Phosphoprotein</keyword>
<keyword id="KW-1267">Proteomics identification</keyword>
<keyword id="KW-1185">Reference proteome</keyword>
<name>CD123_HUMAN</name>
<dbReference type="EMBL" id="D14878">
    <property type="protein sequence ID" value="BAA03593.1"/>
    <property type="molecule type" value="mRNA"/>
</dbReference>
<dbReference type="EMBL" id="U27112">
    <property type="protein sequence ID" value="AAC34738.1"/>
    <property type="molecule type" value="mRNA"/>
</dbReference>
<dbReference type="EMBL" id="CR456966">
    <property type="protein sequence ID" value="CAG33247.1"/>
    <property type="molecule type" value="mRNA"/>
</dbReference>
<dbReference type="EMBL" id="AK289362">
    <property type="protein sequence ID" value="BAF82051.1"/>
    <property type="molecule type" value="mRNA"/>
</dbReference>
<dbReference type="EMBL" id="AL512770">
    <property type="status" value="NOT_ANNOTATED_CDS"/>
    <property type="molecule type" value="Genomic_DNA"/>
</dbReference>
<dbReference type="EMBL" id="CH471072">
    <property type="protein sequence ID" value="EAW86317.1"/>
    <property type="molecule type" value="Genomic_DNA"/>
</dbReference>
<dbReference type="EMBL" id="BC001600">
    <property type="protein sequence ID" value="AAH01600.1"/>
    <property type="molecule type" value="mRNA"/>
</dbReference>
<dbReference type="EMBL" id="BC009598">
    <property type="protein sequence ID" value="AAH09598.1"/>
    <property type="molecule type" value="mRNA"/>
</dbReference>
<dbReference type="CCDS" id="CCDS7090.1"/>
<dbReference type="RefSeq" id="NP_006014.2">
    <property type="nucleotide sequence ID" value="NM_006023.3"/>
</dbReference>
<dbReference type="RefSeq" id="XP_054223074.1">
    <property type="nucleotide sequence ID" value="XM_054367099.1"/>
</dbReference>
<dbReference type="PDB" id="8PHD">
    <property type="method" value="X-ray"/>
    <property type="resolution" value="2.08 A"/>
    <property type="chains" value="A/C=1-336"/>
</dbReference>
<dbReference type="PDB" id="8PHV">
    <property type="method" value="X-ray"/>
    <property type="resolution" value="1.97 A"/>
    <property type="chains" value="A/C=1-336"/>
</dbReference>
<dbReference type="PDBsum" id="8PHD"/>
<dbReference type="PDBsum" id="8PHV"/>
<dbReference type="SMR" id="O75794"/>
<dbReference type="BioGRID" id="114392">
    <property type="interactions" value="1853"/>
</dbReference>
<dbReference type="FunCoup" id="O75794">
    <property type="interactions" value="2041"/>
</dbReference>
<dbReference type="IntAct" id="O75794">
    <property type="interactions" value="26"/>
</dbReference>
<dbReference type="MINT" id="O75794"/>
<dbReference type="STRING" id="9606.ENSP00000281141"/>
<dbReference type="GlyGen" id="O75794">
    <property type="glycosylation" value="1 site, 1 O-linked glycan (1 site)"/>
</dbReference>
<dbReference type="iPTMnet" id="O75794"/>
<dbReference type="PhosphoSitePlus" id="O75794"/>
<dbReference type="SwissPalm" id="O75794"/>
<dbReference type="BioMuta" id="CDC123"/>
<dbReference type="jPOST" id="O75794"/>
<dbReference type="MassIVE" id="O75794"/>
<dbReference type="PaxDb" id="9606-ENSP00000281141"/>
<dbReference type="PeptideAtlas" id="O75794"/>
<dbReference type="ProteomicsDB" id="50198"/>
<dbReference type="Pumba" id="O75794"/>
<dbReference type="Antibodypedia" id="24692">
    <property type="antibodies" value="422 antibodies from 30 providers"/>
</dbReference>
<dbReference type="DNASU" id="8872"/>
<dbReference type="Ensembl" id="ENST00000281141.9">
    <property type="protein sequence ID" value="ENSP00000281141.4"/>
    <property type="gene ID" value="ENSG00000151465.14"/>
</dbReference>
<dbReference type="GeneID" id="8872"/>
<dbReference type="KEGG" id="hsa:8872"/>
<dbReference type="MANE-Select" id="ENST00000281141.9">
    <property type="protein sequence ID" value="ENSP00000281141.4"/>
    <property type="RefSeq nucleotide sequence ID" value="NM_006023.3"/>
    <property type="RefSeq protein sequence ID" value="NP_006014.2"/>
</dbReference>
<dbReference type="UCSC" id="uc001ill.4">
    <property type="organism name" value="human"/>
</dbReference>
<dbReference type="AGR" id="HGNC:16827"/>
<dbReference type="CTD" id="8872"/>
<dbReference type="DisGeNET" id="8872"/>
<dbReference type="GeneCards" id="CDC123"/>
<dbReference type="HGNC" id="HGNC:16827">
    <property type="gene designation" value="CDC123"/>
</dbReference>
<dbReference type="HPA" id="ENSG00000151465">
    <property type="expression patterns" value="Low tissue specificity"/>
</dbReference>
<dbReference type="MIM" id="617708">
    <property type="type" value="gene"/>
</dbReference>
<dbReference type="neXtProt" id="NX_O75794"/>
<dbReference type="OpenTargets" id="ENSG00000151465"/>
<dbReference type="PharmGKB" id="PA162382148"/>
<dbReference type="VEuPathDB" id="HostDB:ENSG00000151465"/>
<dbReference type="eggNOG" id="KOG2983">
    <property type="taxonomic scope" value="Eukaryota"/>
</dbReference>
<dbReference type="GeneTree" id="ENSGT00390000003057"/>
<dbReference type="InParanoid" id="O75794"/>
<dbReference type="OMA" id="TFPDPNF"/>
<dbReference type="OrthoDB" id="360540at2759"/>
<dbReference type="PAN-GO" id="O75794">
    <property type="GO annotations" value="1 GO annotation based on evolutionary models"/>
</dbReference>
<dbReference type="PhylomeDB" id="O75794"/>
<dbReference type="TreeFam" id="TF323348"/>
<dbReference type="PathwayCommons" id="O75794"/>
<dbReference type="SignaLink" id="O75794"/>
<dbReference type="BioGRID-ORCS" id="8872">
    <property type="hits" value="837 hits in 1138 CRISPR screens"/>
</dbReference>
<dbReference type="ChiTaRS" id="CDC123">
    <property type="organism name" value="human"/>
</dbReference>
<dbReference type="GeneWiki" id="CDC123"/>
<dbReference type="GenomeRNAi" id="8872"/>
<dbReference type="Pharos" id="O75794">
    <property type="development level" value="Tbio"/>
</dbReference>
<dbReference type="PRO" id="PR:O75794"/>
<dbReference type="Proteomes" id="UP000005640">
    <property type="component" value="Chromosome 10"/>
</dbReference>
<dbReference type="RNAct" id="O75794">
    <property type="molecule type" value="protein"/>
</dbReference>
<dbReference type="Bgee" id="ENSG00000151465">
    <property type="expression patterns" value="Expressed in rectum and 212 other cell types or tissues"/>
</dbReference>
<dbReference type="ExpressionAtlas" id="O75794">
    <property type="expression patterns" value="baseline and differential"/>
</dbReference>
<dbReference type="GO" id="GO:0005737">
    <property type="term" value="C:cytoplasm"/>
    <property type="evidence" value="ECO:0000314"/>
    <property type="project" value="UniProtKB"/>
</dbReference>
<dbReference type="GO" id="GO:0005524">
    <property type="term" value="F:ATP binding"/>
    <property type="evidence" value="ECO:0000314"/>
    <property type="project" value="UniProtKB"/>
</dbReference>
<dbReference type="GO" id="GO:0000287">
    <property type="term" value="F:magnesium ion binding"/>
    <property type="evidence" value="ECO:0000314"/>
    <property type="project" value="UniProtKB"/>
</dbReference>
<dbReference type="GO" id="GO:0044183">
    <property type="term" value="F:protein folding chaperone"/>
    <property type="evidence" value="ECO:0000250"/>
    <property type="project" value="UniProtKB"/>
</dbReference>
<dbReference type="GO" id="GO:1905143">
    <property type="term" value="P:eukaryotic translation initiation factor 2 complex assembly"/>
    <property type="evidence" value="ECO:0000314"/>
    <property type="project" value="UniProtKB"/>
</dbReference>
<dbReference type="InterPro" id="IPR009772">
    <property type="entry name" value="CDC123"/>
</dbReference>
<dbReference type="PANTHER" id="PTHR15323:SF6">
    <property type="entry name" value="CELL DIVISION CYCLE PROTEIN 123 HOMOLOG"/>
    <property type="match status" value="1"/>
</dbReference>
<dbReference type="PANTHER" id="PTHR15323">
    <property type="entry name" value="D123 PROTEIN"/>
    <property type="match status" value="1"/>
</dbReference>
<dbReference type="Pfam" id="PF07065">
    <property type="entry name" value="D123"/>
    <property type="match status" value="1"/>
</dbReference>
<dbReference type="PIRSF" id="PIRSF007807">
    <property type="entry name" value="Cdc123"/>
    <property type="match status" value="1"/>
</dbReference>
<reference key="1">
    <citation type="journal article" date="1996" name="Exp. Cell Res.">
        <title>An amino acid change in novel protein D123 is responsible for temperature-sensitive G1-phase arrest in a mutant of rat fibroblast line 3Y1.</title>
        <authorList>
            <person name="Okuda A."/>
            <person name="Kimura G."/>
        </authorList>
    </citation>
    <scope>NUCLEOTIDE SEQUENCE [MRNA]</scope>
    <source>
        <tissue>Foreskin</tissue>
    </source>
</reference>
<reference key="2">
    <citation type="journal article" date="1998" name="Exp. Cell Res.">
        <title>Expression study on D123 gene product: evidence for high positivity in testis.</title>
        <authorList>
            <person name="Onisto M."/>
            <person name="Zeilante P."/>
            <person name="Scannapieco P."/>
            <person name="Pellati D."/>
            <person name="Pozza M."/>
            <person name="Caenazzo C."/>
            <person name="Negro A."/>
            <person name="Garbisa S."/>
        </authorList>
    </citation>
    <scope>NUCLEOTIDE SEQUENCE [MRNA]</scope>
    <scope>TISSUE SPECIFICITY</scope>
    <source>
        <tissue>Fibrosarcoma</tissue>
    </source>
</reference>
<reference key="3">
    <citation type="submission" date="2004-06" db="EMBL/GenBank/DDBJ databases">
        <title>Cloning of human full open reading frames in Gateway(TM) system entry vector (pDONR201).</title>
        <authorList>
            <person name="Ebert L."/>
            <person name="Schick M."/>
            <person name="Neubert P."/>
            <person name="Schatten R."/>
            <person name="Henze S."/>
            <person name="Korn B."/>
        </authorList>
    </citation>
    <scope>NUCLEOTIDE SEQUENCE [LARGE SCALE MRNA]</scope>
</reference>
<reference key="4">
    <citation type="journal article" date="2004" name="Nat. Genet.">
        <title>Complete sequencing and characterization of 21,243 full-length human cDNAs.</title>
        <authorList>
            <person name="Ota T."/>
            <person name="Suzuki Y."/>
            <person name="Nishikawa T."/>
            <person name="Otsuki T."/>
            <person name="Sugiyama T."/>
            <person name="Irie R."/>
            <person name="Wakamatsu A."/>
            <person name="Hayashi K."/>
            <person name="Sato H."/>
            <person name="Nagai K."/>
            <person name="Kimura K."/>
            <person name="Makita H."/>
            <person name="Sekine M."/>
            <person name="Obayashi M."/>
            <person name="Nishi T."/>
            <person name="Shibahara T."/>
            <person name="Tanaka T."/>
            <person name="Ishii S."/>
            <person name="Yamamoto J."/>
            <person name="Saito K."/>
            <person name="Kawai Y."/>
            <person name="Isono Y."/>
            <person name="Nakamura Y."/>
            <person name="Nagahari K."/>
            <person name="Murakami K."/>
            <person name="Yasuda T."/>
            <person name="Iwayanagi T."/>
            <person name="Wagatsuma M."/>
            <person name="Shiratori A."/>
            <person name="Sudo H."/>
            <person name="Hosoiri T."/>
            <person name="Kaku Y."/>
            <person name="Kodaira H."/>
            <person name="Kondo H."/>
            <person name="Sugawara M."/>
            <person name="Takahashi M."/>
            <person name="Kanda K."/>
            <person name="Yokoi T."/>
            <person name="Furuya T."/>
            <person name="Kikkawa E."/>
            <person name="Omura Y."/>
            <person name="Abe K."/>
            <person name="Kamihara K."/>
            <person name="Katsuta N."/>
            <person name="Sato K."/>
            <person name="Tanikawa M."/>
            <person name="Yamazaki M."/>
            <person name="Ninomiya K."/>
            <person name="Ishibashi T."/>
            <person name="Yamashita H."/>
            <person name="Murakawa K."/>
            <person name="Fujimori K."/>
            <person name="Tanai H."/>
            <person name="Kimata M."/>
            <person name="Watanabe M."/>
            <person name="Hiraoka S."/>
            <person name="Chiba Y."/>
            <person name="Ishida S."/>
            <person name="Ono Y."/>
            <person name="Takiguchi S."/>
            <person name="Watanabe S."/>
            <person name="Yosida M."/>
            <person name="Hotuta T."/>
            <person name="Kusano J."/>
            <person name="Kanehori K."/>
            <person name="Takahashi-Fujii A."/>
            <person name="Hara H."/>
            <person name="Tanase T.-O."/>
            <person name="Nomura Y."/>
            <person name="Togiya S."/>
            <person name="Komai F."/>
            <person name="Hara R."/>
            <person name="Takeuchi K."/>
            <person name="Arita M."/>
            <person name="Imose N."/>
            <person name="Musashino K."/>
            <person name="Yuuki H."/>
            <person name="Oshima A."/>
            <person name="Sasaki N."/>
            <person name="Aotsuka S."/>
            <person name="Yoshikawa Y."/>
            <person name="Matsunawa H."/>
            <person name="Ichihara T."/>
            <person name="Shiohata N."/>
            <person name="Sano S."/>
            <person name="Moriya S."/>
            <person name="Momiyama H."/>
            <person name="Satoh N."/>
            <person name="Takami S."/>
            <person name="Terashima Y."/>
            <person name="Suzuki O."/>
            <person name="Nakagawa S."/>
            <person name="Senoh A."/>
            <person name="Mizoguchi H."/>
            <person name="Goto Y."/>
            <person name="Shimizu F."/>
            <person name="Wakebe H."/>
            <person name="Hishigaki H."/>
            <person name="Watanabe T."/>
            <person name="Sugiyama A."/>
            <person name="Takemoto M."/>
            <person name="Kawakami B."/>
            <person name="Yamazaki M."/>
            <person name="Watanabe K."/>
            <person name="Kumagai A."/>
            <person name="Itakura S."/>
            <person name="Fukuzumi Y."/>
            <person name="Fujimori Y."/>
            <person name="Komiyama M."/>
            <person name="Tashiro H."/>
            <person name="Tanigami A."/>
            <person name="Fujiwara T."/>
            <person name="Ono T."/>
            <person name="Yamada K."/>
            <person name="Fujii Y."/>
            <person name="Ozaki K."/>
            <person name="Hirao M."/>
            <person name="Ohmori Y."/>
            <person name="Kawabata A."/>
            <person name="Hikiji T."/>
            <person name="Kobatake N."/>
            <person name="Inagaki H."/>
            <person name="Ikema Y."/>
            <person name="Okamoto S."/>
            <person name="Okitani R."/>
            <person name="Kawakami T."/>
            <person name="Noguchi S."/>
            <person name="Itoh T."/>
            <person name="Shigeta K."/>
            <person name="Senba T."/>
            <person name="Matsumura K."/>
            <person name="Nakajima Y."/>
            <person name="Mizuno T."/>
            <person name="Morinaga M."/>
            <person name="Sasaki M."/>
            <person name="Togashi T."/>
            <person name="Oyama M."/>
            <person name="Hata H."/>
            <person name="Watanabe M."/>
            <person name="Komatsu T."/>
            <person name="Mizushima-Sugano J."/>
            <person name="Satoh T."/>
            <person name="Shirai Y."/>
            <person name="Takahashi Y."/>
            <person name="Nakagawa K."/>
            <person name="Okumura K."/>
            <person name="Nagase T."/>
            <person name="Nomura N."/>
            <person name="Kikuchi H."/>
            <person name="Masuho Y."/>
            <person name="Yamashita R."/>
            <person name="Nakai K."/>
            <person name="Yada T."/>
            <person name="Nakamura Y."/>
            <person name="Ohara O."/>
            <person name="Isogai T."/>
            <person name="Sugano S."/>
        </authorList>
    </citation>
    <scope>NUCLEOTIDE SEQUENCE [LARGE SCALE MRNA]</scope>
</reference>
<reference key="5">
    <citation type="journal article" date="2004" name="Nature">
        <title>The DNA sequence and comparative analysis of human chromosome 10.</title>
        <authorList>
            <person name="Deloukas P."/>
            <person name="Earthrowl M.E."/>
            <person name="Grafham D.V."/>
            <person name="Rubenfield M."/>
            <person name="French L."/>
            <person name="Steward C.A."/>
            <person name="Sims S.K."/>
            <person name="Jones M.C."/>
            <person name="Searle S."/>
            <person name="Scott C."/>
            <person name="Howe K."/>
            <person name="Hunt S.E."/>
            <person name="Andrews T.D."/>
            <person name="Gilbert J.G.R."/>
            <person name="Swarbreck D."/>
            <person name="Ashurst J.L."/>
            <person name="Taylor A."/>
            <person name="Battles J."/>
            <person name="Bird C.P."/>
            <person name="Ainscough R."/>
            <person name="Almeida J.P."/>
            <person name="Ashwell R.I.S."/>
            <person name="Ambrose K.D."/>
            <person name="Babbage A.K."/>
            <person name="Bagguley C.L."/>
            <person name="Bailey J."/>
            <person name="Banerjee R."/>
            <person name="Bates K."/>
            <person name="Beasley H."/>
            <person name="Bray-Allen S."/>
            <person name="Brown A.J."/>
            <person name="Brown J.Y."/>
            <person name="Burford D.C."/>
            <person name="Burrill W."/>
            <person name="Burton J."/>
            <person name="Cahill P."/>
            <person name="Camire D."/>
            <person name="Carter N.P."/>
            <person name="Chapman J.C."/>
            <person name="Clark S.Y."/>
            <person name="Clarke G."/>
            <person name="Clee C.M."/>
            <person name="Clegg S."/>
            <person name="Corby N."/>
            <person name="Coulson A."/>
            <person name="Dhami P."/>
            <person name="Dutta I."/>
            <person name="Dunn M."/>
            <person name="Faulkner L."/>
            <person name="Frankish A."/>
            <person name="Frankland J.A."/>
            <person name="Garner P."/>
            <person name="Garnett J."/>
            <person name="Gribble S."/>
            <person name="Griffiths C."/>
            <person name="Grocock R."/>
            <person name="Gustafson E."/>
            <person name="Hammond S."/>
            <person name="Harley J.L."/>
            <person name="Hart E."/>
            <person name="Heath P.D."/>
            <person name="Ho T.P."/>
            <person name="Hopkins B."/>
            <person name="Horne J."/>
            <person name="Howden P.J."/>
            <person name="Huckle E."/>
            <person name="Hynds C."/>
            <person name="Johnson C."/>
            <person name="Johnson D."/>
            <person name="Kana A."/>
            <person name="Kay M."/>
            <person name="Kimberley A.M."/>
            <person name="Kershaw J.K."/>
            <person name="Kokkinaki M."/>
            <person name="Laird G.K."/>
            <person name="Lawlor S."/>
            <person name="Lee H.M."/>
            <person name="Leongamornlert D.A."/>
            <person name="Laird G."/>
            <person name="Lloyd C."/>
            <person name="Lloyd D.M."/>
            <person name="Loveland J."/>
            <person name="Lovell J."/>
            <person name="McLaren S."/>
            <person name="McLay K.E."/>
            <person name="McMurray A."/>
            <person name="Mashreghi-Mohammadi M."/>
            <person name="Matthews L."/>
            <person name="Milne S."/>
            <person name="Nickerson T."/>
            <person name="Nguyen M."/>
            <person name="Overton-Larty E."/>
            <person name="Palmer S.A."/>
            <person name="Pearce A.V."/>
            <person name="Peck A.I."/>
            <person name="Pelan S."/>
            <person name="Phillimore B."/>
            <person name="Porter K."/>
            <person name="Rice C.M."/>
            <person name="Rogosin A."/>
            <person name="Ross M.T."/>
            <person name="Sarafidou T."/>
            <person name="Sehra H.K."/>
            <person name="Shownkeen R."/>
            <person name="Skuce C.D."/>
            <person name="Smith M."/>
            <person name="Standring L."/>
            <person name="Sycamore N."/>
            <person name="Tester J."/>
            <person name="Thorpe A."/>
            <person name="Torcasso W."/>
            <person name="Tracey A."/>
            <person name="Tromans A."/>
            <person name="Tsolas J."/>
            <person name="Wall M."/>
            <person name="Walsh J."/>
            <person name="Wang H."/>
            <person name="Weinstock K."/>
            <person name="West A.P."/>
            <person name="Willey D.L."/>
            <person name="Whitehead S.L."/>
            <person name="Wilming L."/>
            <person name="Wray P.W."/>
            <person name="Young L."/>
            <person name="Chen Y."/>
            <person name="Lovering R.C."/>
            <person name="Moschonas N.K."/>
            <person name="Siebert R."/>
            <person name="Fechtel K."/>
            <person name="Bentley D."/>
            <person name="Durbin R.M."/>
            <person name="Hubbard T."/>
            <person name="Doucette-Stamm L."/>
            <person name="Beck S."/>
            <person name="Smith D.R."/>
            <person name="Rogers J."/>
        </authorList>
    </citation>
    <scope>NUCLEOTIDE SEQUENCE [LARGE SCALE GENOMIC DNA]</scope>
</reference>
<reference key="6">
    <citation type="submission" date="2005-09" db="EMBL/GenBank/DDBJ databases">
        <authorList>
            <person name="Mural R.J."/>
            <person name="Istrail S."/>
            <person name="Sutton G.G."/>
            <person name="Florea L."/>
            <person name="Halpern A.L."/>
            <person name="Mobarry C.M."/>
            <person name="Lippert R."/>
            <person name="Walenz B."/>
            <person name="Shatkay H."/>
            <person name="Dew I."/>
            <person name="Miller J.R."/>
            <person name="Flanigan M.J."/>
            <person name="Edwards N.J."/>
            <person name="Bolanos R."/>
            <person name="Fasulo D."/>
            <person name="Halldorsson B.V."/>
            <person name="Hannenhalli S."/>
            <person name="Turner R."/>
            <person name="Yooseph S."/>
            <person name="Lu F."/>
            <person name="Nusskern D.R."/>
            <person name="Shue B.C."/>
            <person name="Zheng X.H."/>
            <person name="Zhong F."/>
            <person name="Delcher A.L."/>
            <person name="Huson D.H."/>
            <person name="Kravitz S.A."/>
            <person name="Mouchard L."/>
            <person name="Reinert K."/>
            <person name="Remington K.A."/>
            <person name="Clark A.G."/>
            <person name="Waterman M.S."/>
            <person name="Eichler E.E."/>
            <person name="Adams M.D."/>
            <person name="Hunkapiller M.W."/>
            <person name="Myers E.W."/>
            <person name="Venter J.C."/>
        </authorList>
    </citation>
    <scope>NUCLEOTIDE SEQUENCE [LARGE SCALE GENOMIC DNA]</scope>
</reference>
<reference key="7">
    <citation type="journal article" date="2004" name="Genome Res.">
        <title>The status, quality, and expansion of the NIH full-length cDNA project: the Mammalian Gene Collection (MGC).</title>
        <authorList>
            <consortium name="The MGC Project Team"/>
        </authorList>
    </citation>
    <scope>NUCLEOTIDE SEQUENCE [LARGE SCALE MRNA]</scope>
    <source>
        <tissue>Bone marrow</tissue>
        <tissue>Lymph</tissue>
    </source>
</reference>
<reference key="8">
    <citation type="journal article" date="2008" name="Proc. Natl. Acad. Sci. U.S.A.">
        <title>A quantitative atlas of mitotic phosphorylation.</title>
        <authorList>
            <person name="Dephoure N."/>
            <person name="Zhou C."/>
            <person name="Villen J."/>
            <person name="Beausoleil S.A."/>
            <person name="Bakalarski C.E."/>
            <person name="Elledge S.J."/>
            <person name="Gygi S.P."/>
        </authorList>
    </citation>
    <scope>PHOSPHORYLATION [LARGE SCALE ANALYSIS] AT SER-60</scope>
    <scope>IDENTIFICATION BY MASS SPECTROMETRY [LARGE SCALE ANALYSIS]</scope>
    <source>
        <tissue>Cervix carcinoma</tissue>
    </source>
</reference>
<reference key="9">
    <citation type="journal article" date="2011" name="BMC Syst. Biol.">
        <title>Initial characterization of the human central proteome.</title>
        <authorList>
            <person name="Burkard T.R."/>
            <person name="Planyavsky M."/>
            <person name="Kaupe I."/>
            <person name="Breitwieser F.P."/>
            <person name="Buerckstuemmer T."/>
            <person name="Bennett K.L."/>
            <person name="Superti-Furga G."/>
            <person name="Colinge J."/>
        </authorList>
    </citation>
    <scope>IDENTIFICATION BY MASS SPECTROMETRY [LARGE SCALE ANALYSIS]</scope>
</reference>
<reference key="10">
    <citation type="journal article" date="2020" name="Mol. Cell">
        <title>Suppression of MEHMO Syndrome Mutation in eIF2 by Small Molecule ISRIB.</title>
        <authorList>
            <person name="Young-Baird S.K."/>
            <person name="Lourenco M.B."/>
            <person name="Elder M.K."/>
            <person name="Klann E."/>
            <person name="Liebau S."/>
            <person name="Dever T.E."/>
        </authorList>
    </citation>
    <scope>INTERACTION WITH EIF2S1 AND EIF2S2</scope>
</reference>
<reference key="11">
    <citation type="journal article" date="2022" name="J. Biol. Chem.">
        <title>Stepwise assembly of the eukaryotic translation initiation factor 2 complex.</title>
        <authorList>
            <person name="Vanselow S."/>
            <person name="Neumann-Arnold L."/>
            <person name="Wojciech-Moock F."/>
            <person name="Seufert W."/>
        </authorList>
    </citation>
    <scope>FUNCTION</scope>
    <scope>INTERACTION WITH EIF2S1; EIF2S2 AND EIF2S3</scope>
</reference>
<reference evidence="9 10" key="12">
    <citation type="journal article" date="2023" name="J. Struct. Biol.">
        <title>Binding of human Cdc123 to eIF2gamma.</title>
        <authorList>
            <person name="Cardenal Peralta C."/>
            <person name="Vandroux P."/>
            <person name="Neumann-Arnold L."/>
            <person name="Panvert M."/>
            <person name="Fagart J."/>
            <person name="Seufert W."/>
            <person name="Mechulam Y."/>
            <person name="Schmitt E."/>
        </authorList>
    </citation>
    <scope>X-RAY CRYSTALLOGRAPHY (1.97 ANGSTROMS) IN COMPLEX WITH MAGNESIUM; ATP AND EIF2S3</scope>
    <scope>FUNCTION</scope>
    <scope>INTERACTION WITH EIF2S3</scope>
    <scope>ATP-BINDING</scope>
    <scope>MAGNESIUM BINDING</scope>
    <scope>MUTAGENESIS OF ASP-233 AND ASP-246</scope>
</reference>
<proteinExistence type="evidence at protein level"/>
<accession>O75794</accession>
<accession>A8JZZ7</accession>
<accession>Q14107</accession>
<accession>Q5T0L4</accession>
<accession>Q5T0L5</accession>
<accession>Q5T0L7</accession>
<accession>Q5T0L8</accession>
<accession>Q5T0L9</accession>
<evidence type="ECO:0000250" key="1">
    <source>
        <dbReference type="UniProtKB" id="Q05791"/>
    </source>
</evidence>
<evidence type="ECO:0000250" key="2">
    <source>
        <dbReference type="UniProtKB" id="Q62834"/>
    </source>
</evidence>
<evidence type="ECO:0000250" key="3">
    <source>
        <dbReference type="UniProtKB" id="Q9P7N5"/>
    </source>
</evidence>
<evidence type="ECO:0000269" key="4">
    <source>
    </source>
</evidence>
<evidence type="ECO:0000269" key="5">
    <source>
    </source>
</evidence>
<evidence type="ECO:0000269" key="6">
    <source>
    </source>
</evidence>
<evidence type="ECO:0000269" key="7">
    <source>
    </source>
</evidence>
<evidence type="ECO:0000305" key="8"/>
<evidence type="ECO:0007744" key="9">
    <source>
        <dbReference type="PDB" id="8PHD"/>
    </source>
</evidence>
<evidence type="ECO:0007744" key="10">
    <source>
        <dbReference type="PDB" id="8PHV"/>
    </source>
</evidence>
<evidence type="ECO:0007744" key="11">
    <source>
    </source>
</evidence>
<evidence type="ECO:0007829" key="12">
    <source>
        <dbReference type="PDB" id="8PHD"/>
    </source>
</evidence>
<evidence type="ECO:0007829" key="13">
    <source>
        <dbReference type="PDB" id="8PHV"/>
    </source>
</evidence>
<gene>
    <name type="primary">CDC123</name>
    <name type="synonym">C10orf7</name>
    <name type="synonym">D123</name>
</gene>
<sequence length="336" mass="39135">MKKEHVLHCQFSAWYPFFRGVTIKSVILPLPQNVKDYLLDDGTLVVSGRDDPPTHSQPDSDDEAEEIQWSDDENTATLTAPEFPEFATKVQEAINSLGGSVFPKLNWSAPRDAYWIAMNSSLKCKTLSDIFLLFKSSDFITRDFTQPFIHCTDDSPDPCIEYELVLRKWCELIPGAEFRCFVKENKLIGISQRDYTQYYDHISKQKEEIRRCIQDFFKKHIQYKFLDEDFVFDIYRDSRGKVWLIDFNPFGEVTDSLLFTWEELISENNLNGDFSEVDAQEQDSPAFRCTNSEVTVQPSPYLSYRLPKDFVDLSTGEDAHKLIDFLKLKRNQQEDD</sequence>
<protein>
    <recommendedName>
        <fullName evidence="8">Translation initiation factor eIF2 assembly protein</fullName>
    </recommendedName>
    <alternativeName>
        <fullName>Cell division cycle protein 123 homolog</fullName>
        <shortName>Protein D123</shortName>
    </alternativeName>
    <alternativeName>
        <fullName>HT-1080</fullName>
    </alternativeName>
    <alternativeName>
        <fullName>PZ32</fullName>
    </alternativeName>
</protein>
<organism>
    <name type="scientific">Homo sapiens</name>
    <name type="common">Human</name>
    <dbReference type="NCBI Taxonomy" id="9606"/>
    <lineage>
        <taxon>Eukaryota</taxon>
        <taxon>Metazoa</taxon>
        <taxon>Chordata</taxon>
        <taxon>Craniata</taxon>
        <taxon>Vertebrata</taxon>
        <taxon>Euteleostomi</taxon>
        <taxon>Mammalia</taxon>
        <taxon>Eutheria</taxon>
        <taxon>Euarchontoglires</taxon>
        <taxon>Primates</taxon>
        <taxon>Haplorrhini</taxon>
        <taxon>Catarrhini</taxon>
        <taxon>Hominidae</taxon>
        <taxon>Homo</taxon>
    </lineage>
</organism>